<sequence>MTEIDFDIAIIGAGPAGMTAAVYASRANLKTVMIERGIPGGQMANTEEVENFPGFEMITGPDLSTKMFEHAKKFGAVYQYGDIKSVEDKGEYKVINFGNKELTAKAVIIATGAEYKKIGVPGEQELGGRGVSYCAVCDGAFFKNKRLFVIGGGDSAVEEGTFLTKFADKVTIVHRRDELRAQRILQDRAFKNDKIDFIWSHTLKSINEKDGKVGSVTLTSTKDGSEETHEADGVFIYIGMKPLTAPFKDLGITNDVGYIVTKDDMTTSVPGIFAAGDVRDKGLRQIVTATGDGSIAAQSAAEYIEHLNDQA</sequence>
<comment type="catalytic activity">
    <reaction>
        <text>[thioredoxin]-dithiol + NADP(+) = [thioredoxin]-disulfide + NADPH + H(+)</text>
        <dbReference type="Rhea" id="RHEA:20345"/>
        <dbReference type="Rhea" id="RHEA-COMP:10698"/>
        <dbReference type="Rhea" id="RHEA-COMP:10700"/>
        <dbReference type="ChEBI" id="CHEBI:15378"/>
        <dbReference type="ChEBI" id="CHEBI:29950"/>
        <dbReference type="ChEBI" id="CHEBI:50058"/>
        <dbReference type="ChEBI" id="CHEBI:57783"/>
        <dbReference type="ChEBI" id="CHEBI:58349"/>
        <dbReference type="EC" id="1.8.1.9"/>
    </reaction>
</comment>
<comment type="cofactor">
    <cofactor evidence="2">
        <name>FAD</name>
        <dbReference type="ChEBI" id="CHEBI:57692"/>
    </cofactor>
    <text evidence="2">Binds 1 FAD per subunit.</text>
</comment>
<comment type="subunit">
    <text evidence="2">Homodimer.</text>
</comment>
<comment type="subcellular location">
    <subcellularLocation>
        <location evidence="1">Cytoplasm</location>
    </subcellularLocation>
</comment>
<comment type="miscellaneous">
    <text>The active site is a redox-active disulfide bond.</text>
</comment>
<comment type="similarity">
    <text evidence="3">Belongs to the class-II pyridine nucleotide-disulfide oxidoreductase family.</text>
</comment>
<protein>
    <recommendedName>
        <fullName>Thioredoxin reductase</fullName>
        <shortName>TRXR</shortName>
        <ecNumber>1.8.1.9</ecNumber>
    </recommendedName>
</protein>
<accession>P99101</accession>
<accession>Q99VL2</accession>
<name>TRXB_STAAN</name>
<reference key="1">
    <citation type="journal article" date="2001" name="Lancet">
        <title>Whole genome sequencing of meticillin-resistant Staphylococcus aureus.</title>
        <authorList>
            <person name="Kuroda M."/>
            <person name="Ohta T."/>
            <person name="Uchiyama I."/>
            <person name="Baba T."/>
            <person name="Yuzawa H."/>
            <person name="Kobayashi I."/>
            <person name="Cui L."/>
            <person name="Oguchi A."/>
            <person name="Aoki K."/>
            <person name="Nagai Y."/>
            <person name="Lian J.-Q."/>
            <person name="Ito T."/>
            <person name="Kanamori M."/>
            <person name="Matsumaru H."/>
            <person name="Maruyama A."/>
            <person name="Murakami H."/>
            <person name="Hosoyama A."/>
            <person name="Mizutani-Ui Y."/>
            <person name="Takahashi N.K."/>
            <person name="Sawano T."/>
            <person name="Inoue R."/>
            <person name="Kaito C."/>
            <person name="Sekimizu K."/>
            <person name="Hirakawa H."/>
            <person name="Kuhara S."/>
            <person name="Goto S."/>
            <person name="Yabuzaki J."/>
            <person name="Kanehisa M."/>
            <person name="Yamashita A."/>
            <person name="Oshima K."/>
            <person name="Furuya K."/>
            <person name="Yoshino C."/>
            <person name="Shiba T."/>
            <person name="Hattori M."/>
            <person name="Ogasawara N."/>
            <person name="Hayashi H."/>
            <person name="Hiramatsu K."/>
        </authorList>
    </citation>
    <scope>NUCLEOTIDE SEQUENCE [LARGE SCALE GENOMIC DNA]</scope>
    <source>
        <strain>N315</strain>
    </source>
</reference>
<reference key="2">
    <citation type="journal article" date="2005" name="J. Microbiol. Methods">
        <title>Correlation of proteomic and transcriptomic profiles of Staphylococcus aureus during the post-exponential phase of growth.</title>
        <authorList>
            <person name="Scherl A."/>
            <person name="Francois P."/>
            <person name="Bento M."/>
            <person name="Deshusses J.M."/>
            <person name="Charbonnier Y."/>
            <person name="Converset V."/>
            <person name="Huyghe A."/>
            <person name="Walter N."/>
            <person name="Hoogland C."/>
            <person name="Appel R.D."/>
            <person name="Sanchez J.-C."/>
            <person name="Zimmermann-Ivol C.G."/>
            <person name="Corthals G.L."/>
            <person name="Hochstrasser D.F."/>
            <person name="Schrenzel J."/>
        </authorList>
    </citation>
    <scope>IDENTIFICATION BY MASS SPECTROMETRY</scope>
    <source>
        <strain>N315</strain>
    </source>
</reference>
<reference key="3">
    <citation type="submission" date="2007-10" db="UniProtKB">
        <title>Shotgun proteomic analysis of total and membrane protein extracts of S. aureus strain N315.</title>
        <authorList>
            <person name="Vaezzadeh A.R."/>
            <person name="Deshusses J."/>
            <person name="Lescuyer P."/>
            <person name="Hochstrasser D.F."/>
        </authorList>
    </citation>
    <scope>IDENTIFICATION BY MASS SPECTROMETRY [LARGE SCALE ANALYSIS]</scope>
    <source>
        <strain>N315</strain>
    </source>
</reference>
<evidence type="ECO:0000250" key="1"/>
<evidence type="ECO:0000250" key="2">
    <source>
        <dbReference type="UniProtKB" id="P0A9P4"/>
    </source>
</evidence>
<evidence type="ECO:0000305" key="3"/>
<organism>
    <name type="scientific">Staphylococcus aureus (strain N315)</name>
    <dbReference type="NCBI Taxonomy" id="158879"/>
    <lineage>
        <taxon>Bacteria</taxon>
        <taxon>Bacillati</taxon>
        <taxon>Bacillota</taxon>
        <taxon>Bacilli</taxon>
        <taxon>Bacillales</taxon>
        <taxon>Staphylococcaceae</taxon>
        <taxon>Staphylococcus</taxon>
    </lineage>
</organism>
<feature type="chain" id="PRO_0000166746" description="Thioredoxin reductase">
    <location>
        <begin position="1"/>
        <end position="311"/>
    </location>
</feature>
<feature type="binding site" evidence="2">
    <location>
        <begin position="35"/>
        <end position="42"/>
    </location>
    <ligand>
        <name>FAD</name>
        <dbReference type="ChEBI" id="CHEBI:57692"/>
    </ligand>
</feature>
<feature type="binding site" evidence="2">
    <location>
        <begin position="277"/>
        <end position="286"/>
    </location>
    <ligand>
        <name>FAD</name>
        <dbReference type="ChEBI" id="CHEBI:57692"/>
    </ligand>
</feature>
<feature type="disulfide bond" description="Redox-active" evidence="2">
    <location>
        <begin position="134"/>
        <end position="137"/>
    </location>
</feature>
<keyword id="KW-0963">Cytoplasm</keyword>
<keyword id="KW-1015">Disulfide bond</keyword>
<keyword id="KW-0274">FAD</keyword>
<keyword id="KW-0285">Flavoprotein</keyword>
<keyword id="KW-0521">NADP</keyword>
<keyword id="KW-0560">Oxidoreductase</keyword>
<keyword id="KW-0676">Redox-active center</keyword>
<gene>
    <name type="primary">trxB</name>
    <name type="ordered locus">SA0719</name>
</gene>
<proteinExistence type="evidence at protein level"/>
<dbReference type="EC" id="1.8.1.9"/>
<dbReference type="EMBL" id="BA000018">
    <property type="protein sequence ID" value="BAB41952.1"/>
    <property type="molecule type" value="Genomic_DNA"/>
</dbReference>
<dbReference type="PIR" id="E89849">
    <property type="entry name" value="E89849"/>
</dbReference>
<dbReference type="RefSeq" id="WP_000134963.1">
    <property type="nucleotide sequence ID" value="NC_002745.2"/>
</dbReference>
<dbReference type="SMR" id="P99101"/>
<dbReference type="EnsemblBacteria" id="BAB41952">
    <property type="protein sequence ID" value="BAB41952"/>
    <property type="gene ID" value="BAB41952"/>
</dbReference>
<dbReference type="KEGG" id="sau:SA0719"/>
<dbReference type="HOGENOM" id="CLU_031864_5_1_9"/>
<dbReference type="GO" id="GO:0005737">
    <property type="term" value="C:cytoplasm"/>
    <property type="evidence" value="ECO:0007669"/>
    <property type="project" value="UniProtKB-SubCell"/>
</dbReference>
<dbReference type="GO" id="GO:0004791">
    <property type="term" value="F:thioredoxin-disulfide reductase (NADPH) activity"/>
    <property type="evidence" value="ECO:0007669"/>
    <property type="project" value="UniProtKB-EC"/>
</dbReference>
<dbReference type="GO" id="GO:0019430">
    <property type="term" value="P:removal of superoxide radicals"/>
    <property type="evidence" value="ECO:0007669"/>
    <property type="project" value="InterPro"/>
</dbReference>
<dbReference type="Gene3D" id="3.50.50.60">
    <property type="entry name" value="FAD/NAD(P)-binding domain"/>
    <property type="match status" value="2"/>
</dbReference>
<dbReference type="InterPro" id="IPR036188">
    <property type="entry name" value="FAD/NAD-bd_sf"/>
</dbReference>
<dbReference type="InterPro" id="IPR023753">
    <property type="entry name" value="FAD/NAD-binding_dom"/>
</dbReference>
<dbReference type="InterPro" id="IPR050097">
    <property type="entry name" value="Ferredoxin-NADP_redctase_2"/>
</dbReference>
<dbReference type="InterPro" id="IPR008255">
    <property type="entry name" value="Pyr_nucl-diS_OxRdtase_2_AS"/>
</dbReference>
<dbReference type="InterPro" id="IPR005982">
    <property type="entry name" value="Thioredox_Rdtase"/>
</dbReference>
<dbReference type="NCBIfam" id="TIGR01292">
    <property type="entry name" value="TRX_reduct"/>
    <property type="match status" value="1"/>
</dbReference>
<dbReference type="PANTHER" id="PTHR48105">
    <property type="entry name" value="THIOREDOXIN REDUCTASE 1-RELATED-RELATED"/>
    <property type="match status" value="1"/>
</dbReference>
<dbReference type="Pfam" id="PF07992">
    <property type="entry name" value="Pyr_redox_2"/>
    <property type="match status" value="1"/>
</dbReference>
<dbReference type="PRINTS" id="PR00368">
    <property type="entry name" value="FADPNR"/>
</dbReference>
<dbReference type="PRINTS" id="PR00469">
    <property type="entry name" value="PNDRDTASEII"/>
</dbReference>
<dbReference type="SUPFAM" id="SSF51905">
    <property type="entry name" value="FAD/NAD(P)-binding domain"/>
    <property type="match status" value="1"/>
</dbReference>
<dbReference type="PROSITE" id="PS00573">
    <property type="entry name" value="PYRIDINE_REDOX_2"/>
    <property type="match status" value="1"/>
</dbReference>